<gene>
    <name evidence="1" type="primary">Jupiter</name>
    <name type="ORF">GG17211</name>
</gene>
<keyword id="KW-0963">Cytoplasm</keyword>
<keyword id="KW-0206">Cytoskeleton</keyword>
<keyword id="KW-0493">Microtubule</keyword>
<keyword id="KW-0539">Nucleus</keyword>
<keyword id="KW-0597">Phosphoprotein</keyword>
<name>JUPIT_DROER</name>
<reference evidence="4" key="1">
    <citation type="journal article" date="2007" name="Nature">
        <title>Evolution of genes and genomes on the Drosophila phylogeny.</title>
        <authorList>
            <consortium name="Drosophila 12 genomes consortium"/>
        </authorList>
    </citation>
    <scope>NUCLEOTIDE SEQUENCE [LARGE SCALE GENOMIC DNA]</scope>
    <source>
        <strain evidence="4">Tucson 14021-0224.01</strain>
    </source>
</reference>
<dbReference type="EMBL" id="CH954181">
    <property type="protein sequence ID" value="EDV49502.1"/>
    <property type="molecule type" value="Genomic_DNA"/>
</dbReference>
<dbReference type="RefSeq" id="XP_001980544.2">
    <property type="nucleotide sequence ID" value="XM_001980508.2"/>
</dbReference>
<dbReference type="EnsemblMetazoa" id="FBtr0412811">
    <property type="protein sequence ID" value="FBpp0371138"/>
    <property type="gene ID" value="FBgn0109438"/>
</dbReference>
<dbReference type="eggNOG" id="ENOG502S7TC">
    <property type="taxonomic scope" value="Eukaryota"/>
</dbReference>
<dbReference type="HOGENOM" id="CLU_076719_0_0_1"/>
<dbReference type="OMA" id="GANDFHQ"/>
<dbReference type="OrthoDB" id="6367565at2759"/>
<dbReference type="PhylomeDB" id="B3P4I7"/>
<dbReference type="ChiTaRS" id="Jupiter">
    <property type="organism name" value="fly"/>
</dbReference>
<dbReference type="Proteomes" id="UP000008711">
    <property type="component" value="Unassembled WGS sequence"/>
</dbReference>
<dbReference type="GO" id="GO:0005829">
    <property type="term" value="C:cytosol"/>
    <property type="evidence" value="ECO:0000250"/>
    <property type="project" value="UniProtKB"/>
</dbReference>
<dbReference type="GO" id="GO:0005874">
    <property type="term" value="C:microtubule"/>
    <property type="evidence" value="ECO:0007669"/>
    <property type="project" value="UniProtKB-KW"/>
</dbReference>
<dbReference type="GO" id="GO:0005875">
    <property type="term" value="C:microtubule associated complex"/>
    <property type="evidence" value="ECO:0000250"/>
    <property type="project" value="UniProtKB"/>
</dbReference>
<dbReference type="GO" id="GO:0005634">
    <property type="term" value="C:nucleus"/>
    <property type="evidence" value="ECO:0000250"/>
    <property type="project" value="UniProtKB"/>
</dbReference>
<dbReference type="GO" id="GO:0005819">
    <property type="term" value="C:spindle"/>
    <property type="evidence" value="ECO:0007669"/>
    <property type="project" value="UniProtKB-SubCell"/>
</dbReference>
<dbReference type="GO" id="GO:0008017">
    <property type="term" value="F:microtubule binding"/>
    <property type="evidence" value="ECO:0000250"/>
    <property type="project" value="UniProtKB"/>
</dbReference>
<dbReference type="GO" id="GO:0005200">
    <property type="term" value="F:structural constituent of cytoskeleton"/>
    <property type="evidence" value="ECO:0000250"/>
    <property type="project" value="UniProtKB"/>
</dbReference>
<dbReference type="GO" id="GO:0031116">
    <property type="term" value="P:positive regulation of microtubule polymerization"/>
    <property type="evidence" value="ECO:0000250"/>
    <property type="project" value="UniProtKB"/>
</dbReference>
<dbReference type="InterPro" id="IPR033335">
    <property type="entry name" value="JUPITER"/>
</dbReference>
<dbReference type="PANTHER" id="PTHR34930">
    <property type="entry name" value="GEO05313P1"/>
    <property type="match status" value="1"/>
</dbReference>
<dbReference type="PANTHER" id="PTHR34930:SF2">
    <property type="entry name" value="MICROTUBULE-ASSOCIATED PROTEIN JUPITER"/>
    <property type="match status" value="1"/>
</dbReference>
<dbReference type="Pfam" id="PF17054">
    <property type="entry name" value="JUPITER"/>
    <property type="match status" value="1"/>
</dbReference>
<feature type="chain" id="PRO_0000355126" description="Microtubule-associated protein Jupiter">
    <location>
        <begin position="1"/>
        <end position="345"/>
    </location>
</feature>
<feature type="region of interest" description="Disordered" evidence="2">
    <location>
        <begin position="1"/>
        <end position="34"/>
    </location>
</feature>
<feature type="region of interest" description="Disordered" evidence="2">
    <location>
        <begin position="78"/>
        <end position="100"/>
    </location>
</feature>
<feature type="region of interest" description="Disordered" evidence="2">
    <location>
        <begin position="127"/>
        <end position="241"/>
    </location>
</feature>
<feature type="region of interest" description="Disordered" evidence="2">
    <location>
        <begin position="300"/>
        <end position="345"/>
    </location>
</feature>
<feature type="compositionally biased region" description="Polar residues" evidence="2">
    <location>
        <begin position="1"/>
        <end position="14"/>
    </location>
</feature>
<feature type="compositionally biased region" description="Basic and acidic residues" evidence="2">
    <location>
        <begin position="78"/>
        <end position="87"/>
    </location>
</feature>
<feature type="compositionally biased region" description="Low complexity" evidence="2">
    <location>
        <begin position="132"/>
        <end position="145"/>
    </location>
</feature>
<feature type="compositionally biased region" description="Polar residues" evidence="2">
    <location>
        <begin position="146"/>
        <end position="164"/>
    </location>
</feature>
<feature type="compositionally biased region" description="Pro residues" evidence="2">
    <location>
        <begin position="177"/>
        <end position="191"/>
    </location>
</feature>
<feature type="compositionally biased region" description="Polar residues" evidence="2">
    <location>
        <begin position="212"/>
        <end position="226"/>
    </location>
</feature>
<feature type="compositionally biased region" description="Polar residues" evidence="2">
    <location>
        <begin position="315"/>
        <end position="326"/>
    </location>
</feature>
<feature type="modified residue" description="Phosphoserine" evidence="1">
    <location>
        <position position="24"/>
    </location>
</feature>
<feature type="modified residue" description="Phosphothreonine" evidence="1">
    <location>
        <position position="35"/>
    </location>
</feature>
<feature type="modified residue" description="Phosphothreonine" evidence="1">
    <location>
        <position position="92"/>
    </location>
</feature>
<feature type="modified residue" description="Phosphothreonine" evidence="1">
    <location>
        <position position="96"/>
    </location>
</feature>
<feature type="modified residue" description="Phosphoserine" evidence="1">
    <location>
        <position position="105"/>
    </location>
</feature>
<feature type="modified residue" description="Phosphoserine" evidence="1">
    <location>
        <position position="134"/>
    </location>
</feature>
<feature type="modified residue" description="Phosphoserine" evidence="1">
    <location>
        <position position="145"/>
    </location>
</feature>
<protein>
    <recommendedName>
        <fullName evidence="1">Microtubule-associated protein Jupiter</fullName>
    </recommendedName>
</protein>
<sequence>MISNFDCTDNQASSKVLRPPGGGSSDIFGSEMPQTPRNVKNRMASNIFAAEKDNGVKNNVRQGAHRFYFIGDAPRRGQKTVDSHNRLFGEPTRPITPGKNHMKSSIPFGQNTEAVASAQKLLTTNGHYNGKSGSVSSASSSVSSSTENLKMNSGSRSVFRNMSTGPAVKETSLPESLCPPSPVRIEPPTPPADALSIDNSCRDSEIGDVPADNSTYTKSDQVNEACQTRRDSGNNPEQPHSLDKMAGVANIKEPLGLCPNDVKEGAQACSKLDSRNPITGLGLNGDGVGGLKPKKLKIREGNPVTGEGYKAGGNDYNQRQESSNAGTPVINKNRIPPGGYSSGLW</sequence>
<accession>B3P4I7</accession>
<evidence type="ECO:0000250" key="1">
    <source>
        <dbReference type="UniProtKB" id="Q9I7K0"/>
    </source>
</evidence>
<evidence type="ECO:0000256" key="2">
    <source>
        <dbReference type="SAM" id="MobiDB-lite"/>
    </source>
</evidence>
<evidence type="ECO:0000305" key="3"/>
<evidence type="ECO:0000312" key="4">
    <source>
        <dbReference type="EMBL" id="EDV49502.1"/>
    </source>
</evidence>
<comment type="function">
    <text evidence="1">Binds to all microtubule populations.</text>
</comment>
<comment type="subcellular location">
    <subcellularLocation>
        <location evidence="1">Nucleus</location>
    </subcellularLocation>
    <subcellularLocation>
        <location evidence="1">Cytoplasm</location>
    </subcellularLocation>
    <subcellularLocation>
        <location evidence="1">Cytoplasm</location>
        <location evidence="1">Cytoskeleton</location>
    </subcellularLocation>
    <subcellularLocation>
        <location evidence="1">Cytoplasm</location>
        <location evidence="1">Cytoskeleton</location>
        <location evidence="1">Spindle</location>
    </subcellularLocation>
</comment>
<comment type="similarity">
    <text evidence="3">Belongs to the MAP Jupiter family.</text>
</comment>
<organism>
    <name type="scientific">Drosophila erecta</name>
    <name type="common">Fruit fly</name>
    <dbReference type="NCBI Taxonomy" id="7220"/>
    <lineage>
        <taxon>Eukaryota</taxon>
        <taxon>Metazoa</taxon>
        <taxon>Ecdysozoa</taxon>
        <taxon>Arthropoda</taxon>
        <taxon>Hexapoda</taxon>
        <taxon>Insecta</taxon>
        <taxon>Pterygota</taxon>
        <taxon>Neoptera</taxon>
        <taxon>Endopterygota</taxon>
        <taxon>Diptera</taxon>
        <taxon>Brachycera</taxon>
        <taxon>Muscomorpha</taxon>
        <taxon>Ephydroidea</taxon>
        <taxon>Drosophilidae</taxon>
        <taxon>Drosophila</taxon>
        <taxon>Sophophora</taxon>
    </lineage>
</organism>
<proteinExistence type="inferred from homology"/>